<dbReference type="EC" id="3.5.1.47" evidence="1"/>
<dbReference type="EMBL" id="CP001638">
    <property type="protein sequence ID" value="ACS23808.1"/>
    <property type="molecule type" value="Genomic_DNA"/>
</dbReference>
<dbReference type="SMR" id="C5D827"/>
<dbReference type="STRING" id="471223.GWCH70_0945"/>
<dbReference type="MEROPS" id="M20.A27"/>
<dbReference type="KEGG" id="gwc:GWCH70_0945"/>
<dbReference type="eggNOG" id="COG1473">
    <property type="taxonomic scope" value="Bacteria"/>
</dbReference>
<dbReference type="HOGENOM" id="CLU_023257_0_1_9"/>
<dbReference type="OrthoDB" id="9776731at2"/>
<dbReference type="UniPathway" id="UPA00034">
    <property type="reaction ID" value="UER00024"/>
</dbReference>
<dbReference type="GO" id="GO:0050118">
    <property type="term" value="F:N-acetyldiaminopimelate deacetylase activity"/>
    <property type="evidence" value="ECO:0007669"/>
    <property type="project" value="UniProtKB-UniRule"/>
</dbReference>
<dbReference type="GO" id="GO:0019877">
    <property type="term" value="P:diaminopimelate biosynthetic process"/>
    <property type="evidence" value="ECO:0007669"/>
    <property type="project" value="UniProtKB-UniRule"/>
</dbReference>
<dbReference type="GO" id="GO:0009089">
    <property type="term" value="P:lysine biosynthetic process via diaminopimelate"/>
    <property type="evidence" value="ECO:0007669"/>
    <property type="project" value="UniProtKB-UniRule"/>
</dbReference>
<dbReference type="CDD" id="cd05670">
    <property type="entry name" value="M20_Acy1_YkuR-like"/>
    <property type="match status" value="1"/>
</dbReference>
<dbReference type="FunFam" id="3.30.70.360:FF:000001">
    <property type="entry name" value="N-acetyldiaminopimelate deacetylase"/>
    <property type="match status" value="1"/>
</dbReference>
<dbReference type="Gene3D" id="3.30.70.360">
    <property type="match status" value="1"/>
</dbReference>
<dbReference type="Gene3D" id="3.40.630.10">
    <property type="entry name" value="Zn peptidases"/>
    <property type="match status" value="1"/>
</dbReference>
<dbReference type="HAMAP" id="MF_01692">
    <property type="entry name" value="DapEL"/>
    <property type="match status" value="1"/>
</dbReference>
<dbReference type="InterPro" id="IPR023905">
    <property type="entry name" value="AcetylDAP_deacetylase"/>
</dbReference>
<dbReference type="InterPro" id="IPR017439">
    <property type="entry name" value="Amidohydrolase"/>
</dbReference>
<dbReference type="InterPro" id="IPR036264">
    <property type="entry name" value="Bact_exopeptidase_dim_dom"/>
</dbReference>
<dbReference type="InterPro" id="IPR002933">
    <property type="entry name" value="Peptidase_M20"/>
</dbReference>
<dbReference type="InterPro" id="IPR011650">
    <property type="entry name" value="Peptidase_M20_dimer"/>
</dbReference>
<dbReference type="NCBIfam" id="TIGR01891">
    <property type="entry name" value="amidohydrolases"/>
    <property type="match status" value="1"/>
</dbReference>
<dbReference type="PANTHER" id="PTHR11014:SF98">
    <property type="entry name" value="N-ACETYLDIAMINOPIMELATE DEACETYLASE"/>
    <property type="match status" value="1"/>
</dbReference>
<dbReference type="PANTHER" id="PTHR11014">
    <property type="entry name" value="PEPTIDASE M20 FAMILY MEMBER"/>
    <property type="match status" value="1"/>
</dbReference>
<dbReference type="Pfam" id="PF07687">
    <property type="entry name" value="M20_dimer"/>
    <property type="match status" value="1"/>
</dbReference>
<dbReference type="Pfam" id="PF01546">
    <property type="entry name" value="Peptidase_M20"/>
    <property type="match status" value="1"/>
</dbReference>
<dbReference type="PIRSF" id="PIRSF005962">
    <property type="entry name" value="Pept_M20D_amidohydro"/>
    <property type="match status" value="1"/>
</dbReference>
<dbReference type="SUPFAM" id="SSF55031">
    <property type="entry name" value="Bacterial exopeptidase dimerisation domain"/>
    <property type="match status" value="1"/>
</dbReference>
<dbReference type="SUPFAM" id="SSF53187">
    <property type="entry name" value="Zn-dependent exopeptidases"/>
    <property type="match status" value="1"/>
</dbReference>
<gene>
    <name type="ordered locus">GWCH70_0945</name>
</gene>
<sequence>MSSISPFVAIRRDLHKIPELGFQEFKTQQYLLRYIHALPQERLEIQTWKTGIFVKVKGTAPRKMIGYRTDIDGLPIKEETGLPYSSEHEGNMHACGHDVHMSIALGLLTHFAEHPIQDDLLFIFQPAEEGPGGAKPMLESEIMKVWKPDMILALHIAPEYPVGTIATKEGLLFANTSELFIDLKGKGGHAAFPHLANDMVVAACSLVTQLQSIVARNVDPLDSAVITIGKISGGTVQNVIAEHARLEGTIRTLSVDSMKKVKERIEAMVSGIKMAYQCEAEIDYGSMYHQVYNDPELTTEFIQFAENYQGIRFIRCKEAMTGEDFGYMLAEIPGFMFWLGVDSPYGLHHAKLTPNEAAIDQGISFLISYITWKGNN</sequence>
<proteinExistence type="inferred from homology"/>
<comment type="function">
    <text evidence="1">Catalyzes the conversion of N-acetyl-diaminopimelate to diaminopimelate and acetate.</text>
</comment>
<comment type="catalytic activity">
    <reaction evidence="1">
        <text>N-acetyl-(2S,6S)-2,6-diaminopimelate + H2O = (2S,6S)-2,6-diaminopimelate + acetate</text>
        <dbReference type="Rhea" id="RHEA:20405"/>
        <dbReference type="ChEBI" id="CHEBI:15377"/>
        <dbReference type="ChEBI" id="CHEBI:30089"/>
        <dbReference type="ChEBI" id="CHEBI:57609"/>
        <dbReference type="ChEBI" id="CHEBI:58767"/>
        <dbReference type="EC" id="3.5.1.47"/>
    </reaction>
</comment>
<comment type="pathway">
    <text evidence="1">Amino-acid biosynthesis; L-lysine biosynthesis via DAP pathway; LL-2,6-diaminopimelate from (S)-tetrahydrodipicolinate (acetylase route): step 3/3.</text>
</comment>
<comment type="similarity">
    <text evidence="1">Belongs to the peptidase M20A family. N-acetyldiaminopimelate deacetylase subfamily.</text>
</comment>
<feature type="chain" id="PRO_1000215932" description="N-acetyldiaminopimelate deacetylase">
    <location>
        <begin position="1"/>
        <end position="376"/>
    </location>
</feature>
<feature type="active site" evidence="1">
    <location>
        <position position="70"/>
    </location>
</feature>
<feature type="active site" description="Proton acceptor" evidence="1">
    <location>
        <position position="129"/>
    </location>
</feature>
<reference key="1">
    <citation type="submission" date="2009-06" db="EMBL/GenBank/DDBJ databases">
        <title>Complete sequence of chromosome of Geopacillus sp. WCH70.</title>
        <authorList>
            <consortium name="US DOE Joint Genome Institute"/>
            <person name="Lucas S."/>
            <person name="Copeland A."/>
            <person name="Lapidus A."/>
            <person name="Glavina del Rio T."/>
            <person name="Dalin E."/>
            <person name="Tice H."/>
            <person name="Bruce D."/>
            <person name="Goodwin L."/>
            <person name="Pitluck S."/>
            <person name="Chertkov O."/>
            <person name="Brettin T."/>
            <person name="Detter J.C."/>
            <person name="Han C."/>
            <person name="Larimer F."/>
            <person name="Land M."/>
            <person name="Hauser L."/>
            <person name="Kyrpides N."/>
            <person name="Mikhailova N."/>
            <person name="Brumm P."/>
            <person name="Mead D.A."/>
            <person name="Richardson P."/>
        </authorList>
    </citation>
    <scope>NUCLEOTIDE SEQUENCE [LARGE SCALE GENOMIC DNA]</scope>
    <source>
        <strain>WCH70</strain>
    </source>
</reference>
<keyword id="KW-0028">Amino-acid biosynthesis</keyword>
<keyword id="KW-0220">Diaminopimelate biosynthesis</keyword>
<keyword id="KW-0378">Hydrolase</keyword>
<keyword id="KW-0457">Lysine biosynthesis</keyword>
<evidence type="ECO:0000255" key="1">
    <source>
        <dbReference type="HAMAP-Rule" id="MF_01692"/>
    </source>
</evidence>
<protein>
    <recommendedName>
        <fullName evidence="1">N-acetyldiaminopimelate deacetylase</fullName>
        <ecNumber evidence="1">3.5.1.47</ecNumber>
    </recommendedName>
</protein>
<organism>
    <name type="scientific">Geobacillus sp. (strain WCH70)</name>
    <dbReference type="NCBI Taxonomy" id="471223"/>
    <lineage>
        <taxon>Bacteria</taxon>
        <taxon>Bacillati</taxon>
        <taxon>Bacillota</taxon>
        <taxon>Bacilli</taxon>
        <taxon>Bacillales</taxon>
        <taxon>Anoxybacillaceae</taxon>
        <taxon>Geobacillus</taxon>
    </lineage>
</organism>
<name>DAPEL_GEOSW</name>
<accession>C5D827</accession>